<feature type="chain" id="PRO_0000288665" description="ATP synthase subunit a">
    <location>
        <begin position="1"/>
        <end position="242"/>
    </location>
</feature>
<feature type="transmembrane region" description="Helical" evidence="1">
    <location>
        <begin position="29"/>
        <end position="49"/>
    </location>
</feature>
<feature type="transmembrane region" description="Helical" evidence="1">
    <location>
        <begin position="84"/>
        <end position="104"/>
    </location>
</feature>
<feature type="transmembrane region" description="Helical" evidence="1">
    <location>
        <begin position="114"/>
        <end position="134"/>
    </location>
</feature>
<feature type="transmembrane region" description="Helical" evidence="1">
    <location>
        <begin position="140"/>
        <end position="160"/>
    </location>
</feature>
<feature type="transmembrane region" description="Helical" evidence="1">
    <location>
        <begin position="181"/>
        <end position="201"/>
    </location>
</feature>
<feature type="transmembrane region" description="Helical" evidence="1">
    <location>
        <begin position="203"/>
        <end position="223"/>
    </location>
</feature>
<evidence type="ECO:0000255" key="1">
    <source>
        <dbReference type="HAMAP-Rule" id="MF_01393"/>
    </source>
</evidence>
<proteinExistence type="inferred from homology"/>
<accession>Q68XQ1</accession>
<comment type="function">
    <text evidence="1">Key component of the proton channel; it plays a direct role in the translocation of protons across the membrane.</text>
</comment>
<comment type="subunit">
    <text evidence="1">F-type ATPases have 2 components, CF(1) - the catalytic core - and CF(0) - the membrane proton channel. CF(1) has five subunits: alpha(3), beta(3), gamma(1), delta(1), epsilon(1). CF(0) has three main subunits: a(1), b(2) and c(9-12). The alpha and beta chains form an alternating ring which encloses part of the gamma chain. CF(1) is attached to CF(0) by a central stalk formed by the gamma and epsilon chains, while a peripheral stalk is formed by the delta and b chains.</text>
</comment>
<comment type="subcellular location">
    <subcellularLocation>
        <location evidence="1">Cell inner membrane</location>
        <topology evidence="1">Multi-pass membrane protein</topology>
    </subcellularLocation>
</comment>
<comment type="similarity">
    <text evidence="1">Belongs to the ATPase A chain family.</text>
</comment>
<sequence>MTNSPLIQFNIKKLIDIKMFGLDVSFTNSSIYMLLASTLALTYFYLAFYNRKLIPSRLQVSAEIVYNFVVDMLNQNIGIKGRKFIPLVFSLFIFILFCNLLGMTPYSFTATSHIIVTFTLALLIFLTVTIVGFIKHGMSFLTLFLPQGTPVWLAPLMIVIELFTYLAKPVSLSLRLAANMMAGHVLLKVIAGFTVSLMIYLKFLPIPLIVILIGFEIFVAILQAYIFTILSCMYLNDAINLH</sequence>
<name>ATP6_RICTY</name>
<dbReference type="EMBL" id="AE017197">
    <property type="protein sequence ID" value="AAU03591.1"/>
    <property type="molecule type" value="Genomic_DNA"/>
</dbReference>
<dbReference type="RefSeq" id="WP_011190578.1">
    <property type="nucleotide sequence ID" value="NC_006142.1"/>
</dbReference>
<dbReference type="SMR" id="Q68XQ1"/>
<dbReference type="KEGG" id="rty:RT0105"/>
<dbReference type="eggNOG" id="COG0356">
    <property type="taxonomic scope" value="Bacteria"/>
</dbReference>
<dbReference type="HOGENOM" id="CLU_041018_0_2_5"/>
<dbReference type="OrthoDB" id="9809130at2"/>
<dbReference type="Proteomes" id="UP000000604">
    <property type="component" value="Chromosome"/>
</dbReference>
<dbReference type="GO" id="GO:0005886">
    <property type="term" value="C:plasma membrane"/>
    <property type="evidence" value="ECO:0007669"/>
    <property type="project" value="UniProtKB-SubCell"/>
</dbReference>
<dbReference type="GO" id="GO:0045259">
    <property type="term" value="C:proton-transporting ATP synthase complex"/>
    <property type="evidence" value="ECO:0007669"/>
    <property type="project" value="UniProtKB-KW"/>
</dbReference>
<dbReference type="GO" id="GO:0046933">
    <property type="term" value="F:proton-transporting ATP synthase activity, rotational mechanism"/>
    <property type="evidence" value="ECO:0007669"/>
    <property type="project" value="UniProtKB-UniRule"/>
</dbReference>
<dbReference type="CDD" id="cd00310">
    <property type="entry name" value="ATP-synt_Fo_a_6"/>
    <property type="match status" value="1"/>
</dbReference>
<dbReference type="FunFam" id="1.20.120.220:FF:000003">
    <property type="entry name" value="ATP synthase subunit a"/>
    <property type="match status" value="1"/>
</dbReference>
<dbReference type="Gene3D" id="1.20.120.220">
    <property type="entry name" value="ATP synthase, F0 complex, subunit A"/>
    <property type="match status" value="1"/>
</dbReference>
<dbReference type="HAMAP" id="MF_01393">
    <property type="entry name" value="ATP_synth_a_bact"/>
    <property type="match status" value="1"/>
</dbReference>
<dbReference type="InterPro" id="IPR000568">
    <property type="entry name" value="ATP_synth_F0_asu"/>
</dbReference>
<dbReference type="InterPro" id="IPR023011">
    <property type="entry name" value="ATP_synth_F0_asu_AS"/>
</dbReference>
<dbReference type="InterPro" id="IPR045083">
    <property type="entry name" value="ATP_synth_F0_asu_bact/mt"/>
</dbReference>
<dbReference type="InterPro" id="IPR035908">
    <property type="entry name" value="F0_ATP_A_sf"/>
</dbReference>
<dbReference type="NCBIfam" id="TIGR01131">
    <property type="entry name" value="ATP_synt_6_or_A"/>
    <property type="match status" value="1"/>
</dbReference>
<dbReference type="NCBIfam" id="NF004482">
    <property type="entry name" value="PRK05815.2-4"/>
    <property type="match status" value="1"/>
</dbReference>
<dbReference type="PANTHER" id="PTHR11410">
    <property type="entry name" value="ATP SYNTHASE SUBUNIT A"/>
    <property type="match status" value="1"/>
</dbReference>
<dbReference type="PANTHER" id="PTHR11410:SF0">
    <property type="entry name" value="ATP SYNTHASE SUBUNIT A"/>
    <property type="match status" value="1"/>
</dbReference>
<dbReference type="Pfam" id="PF00119">
    <property type="entry name" value="ATP-synt_A"/>
    <property type="match status" value="1"/>
</dbReference>
<dbReference type="PRINTS" id="PR00123">
    <property type="entry name" value="ATPASEA"/>
</dbReference>
<dbReference type="SUPFAM" id="SSF81336">
    <property type="entry name" value="F1F0 ATP synthase subunit A"/>
    <property type="match status" value="1"/>
</dbReference>
<dbReference type="PROSITE" id="PS00449">
    <property type="entry name" value="ATPASE_A"/>
    <property type="match status" value="1"/>
</dbReference>
<organism>
    <name type="scientific">Rickettsia typhi (strain ATCC VR-144 / Wilmington)</name>
    <dbReference type="NCBI Taxonomy" id="257363"/>
    <lineage>
        <taxon>Bacteria</taxon>
        <taxon>Pseudomonadati</taxon>
        <taxon>Pseudomonadota</taxon>
        <taxon>Alphaproteobacteria</taxon>
        <taxon>Rickettsiales</taxon>
        <taxon>Rickettsiaceae</taxon>
        <taxon>Rickettsieae</taxon>
        <taxon>Rickettsia</taxon>
        <taxon>typhus group</taxon>
    </lineage>
</organism>
<reference key="1">
    <citation type="journal article" date="2004" name="J. Bacteriol.">
        <title>Complete genome sequence of Rickettsia typhi and comparison with sequences of other Rickettsiae.</title>
        <authorList>
            <person name="McLeod M.P."/>
            <person name="Qin X."/>
            <person name="Karpathy S.E."/>
            <person name="Gioia J."/>
            <person name="Highlander S.K."/>
            <person name="Fox G.E."/>
            <person name="McNeill T.Z."/>
            <person name="Jiang H."/>
            <person name="Muzny D."/>
            <person name="Jacob L.S."/>
            <person name="Hawes A.C."/>
            <person name="Sodergren E."/>
            <person name="Gill R."/>
            <person name="Hume J."/>
            <person name="Morgan M."/>
            <person name="Fan G."/>
            <person name="Amin A.G."/>
            <person name="Gibbs R.A."/>
            <person name="Hong C."/>
            <person name="Yu X.-J."/>
            <person name="Walker D.H."/>
            <person name="Weinstock G.M."/>
        </authorList>
    </citation>
    <scope>NUCLEOTIDE SEQUENCE [LARGE SCALE GENOMIC DNA]</scope>
    <source>
        <strain>ATCC VR-144 / Wilmington</strain>
    </source>
</reference>
<keyword id="KW-0066">ATP synthesis</keyword>
<keyword id="KW-0997">Cell inner membrane</keyword>
<keyword id="KW-1003">Cell membrane</keyword>
<keyword id="KW-0138">CF(0)</keyword>
<keyword id="KW-0375">Hydrogen ion transport</keyword>
<keyword id="KW-0406">Ion transport</keyword>
<keyword id="KW-0472">Membrane</keyword>
<keyword id="KW-0812">Transmembrane</keyword>
<keyword id="KW-1133">Transmembrane helix</keyword>
<keyword id="KW-0813">Transport</keyword>
<protein>
    <recommendedName>
        <fullName evidence="1">ATP synthase subunit a</fullName>
    </recommendedName>
    <alternativeName>
        <fullName evidence="1">ATP synthase F0 sector subunit a</fullName>
    </alternativeName>
    <alternativeName>
        <fullName evidence="1">F-ATPase subunit 6</fullName>
    </alternativeName>
</protein>
<gene>
    <name evidence="1" type="primary">atpB</name>
    <name type="ordered locus">RT0105</name>
</gene>